<protein>
    <recommendedName>
        <fullName>Ribosomal protein uS12 methylthiotransferase RimO</fullName>
        <shortName>uS12 MTTase</shortName>
        <shortName>uS12 methylthiotransferase</shortName>
        <ecNumber evidence="4">2.8.4.4</ecNumber>
    </recommendedName>
    <alternativeName>
        <fullName>Ribosomal protein uS12 (aspartate(89)-C(3))-methylthiotransferase</fullName>
    </alternativeName>
    <alternativeName>
        <fullName>Ribosome maturation factor RimO</fullName>
    </alternativeName>
</protein>
<sequence length="441" mass="49582">MSKVTPQPKIGFVSLGCPKNLVDSERILTELRTEGYDVVPSYDDADMVIVNTCGFIDSAVQESLEAIGEALNENGKVIVTGCLGAKEDQIREVHPKVLEITGPHSYEQVLEHVHHYVPKPKHNPFLSLVPEQGVKLTPRHYAYLKISEGCNHRCTFCIIPSMRGDLVSRPIGEVLSEAKRLVDAGVKEILVISQDTSAYGVDVKHRTGFHNGEPVKTSMVSLCEQLSKLGIWTRLHYVYPYPHVDDVIPLMAEGKILPYLDIPLQHASPRILKLMKRPGSVDRQLARIKQWREICPELTLRSTFIVGFPGETEEDFQMLLDFLKEARLDRVGCFKYSPVEGADANALPDQVPEEVKEERWNRFMQLQQQISAERLQEKVGREILVIIDEVDEEGAIGRSMADAPEIDGAVYLNGETNVKPGDILRVKVEHADEYDLWGSRV</sequence>
<gene>
    <name type="primary">rimO</name>
    <name type="synonym">yliG</name>
    <name type="ordered locus">b0835</name>
    <name type="ordered locus">JW0819</name>
</gene>
<feature type="chain" id="PRO_0000141738" description="Ribosomal protein uS12 methylthiotransferase RimO">
    <location>
        <begin position="1"/>
        <end position="441"/>
    </location>
</feature>
<feature type="domain" description="MTTase N-terminal">
    <location>
        <begin position="8"/>
        <end position="118"/>
    </location>
</feature>
<feature type="domain" description="Radical SAM core" evidence="2">
    <location>
        <begin position="136"/>
        <end position="373"/>
    </location>
</feature>
<feature type="domain" description="TRAM">
    <location>
        <begin position="376"/>
        <end position="441"/>
    </location>
</feature>
<feature type="binding site" evidence="1">
    <location>
        <position position="17"/>
    </location>
    <ligand>
        <name>[4Fe-4S] cluster</name>
        <dbReference type="ChEBI" id="CHEBI:49883"/>
        <label>1</label>
    </ligand>
</feature>
<feature type="binding site" evidence="1">
    <location>
        <position position="53"/>
    </location>
    <ligand>
        <name>[4Fe-4S] cluster</name>
        <dbReference type="ChEBI" id="CHEBI:49883"/>
        <label>1</label>
    </ligand>
</feature>
<feature type="binding site" evidence="1">
    <location>
        <position position="82"/>
    </location>
    <ligand>
        <name>[4Fe-4S] cluster</name>
        <dbReference type="ChEBI" id="CHEBI:49883"/>
        <label>1</label>
    </ligand>
</feature>
<feature type="binding site" evidence="1">
    <location>
        <position position="150"/>
    </location>
    <ligand>
        <name>[4Fe-4S] cluster</name>
        <dbReference type="ChEBI" id="CHEBI:49883"/>
        <label>2</label>
        <note>4Fe-4S-S-AdoMet</note>
    </ligand>
</feature>
<feature type="binding site" evidence="1">
    <location>
        <position position="154"/>
    </location>
    <ligand>
        <name>[4Fe-4S] cluster</name>
        <dbReference type="ChEBI" id="CHEBI:49883"/>
        <label>2</label>
        <note>4Fe-4S-S-AdoMet</note>
    </ligand>
</feature>
<feature type="binding site" evidence="1">
    <location>
        <position position="157"/>
    </location>
    <ligand>
        <name>[4Fe-4S] cluster</name>
        <dbReference type="ChEBI" id="CHEBI:49883"/>
        <label>2</label>
        <note>4Fe-4S-S-AdoMet</note>
    </ligand>
</feature>
<name>RIMO_ECOLI</name>
<organism>
    <name type="scientific">Escherichia coli (strain K12)</name>
    <dbReference type="NCBI Taxonomy" id="83333"/>
    <lineage>
        <taxon>Bacteria</taxon>
        <taxon>Pseudomonadati</taxon>
        <taxon>Pseudomonadota</taxon>
        <taxon>Gammaproteobacteria</taxon>
        <taxon>Enterobacterales</taxon>
        <taxon>Enterobacteriaceae</taxon>
        <taxon>Escherichia</taxon>
    </lineage>
</organism>
<reference key="1">
    <citation type="journal article" date="1996" name="DNA Res.">
        <title>A 718-kb DNA sequence of the Escherichia coli K-12 genome corresponding to the 12.7-28.0 min region on the linkage map.</title>
        <authorList>
            <person name="Oshima T."/>
            <person name="Aiba H."/>
            <person name="Baba T."/>
            <person name="Fujita K."/>
            <person name="Hayashi K."/>
            <person name="Honjo A."/>
            <person name="Ikemoto K."/>
            <person name="Inada T."/>
            <person name="Itoh T."/>
            <person name="Kajihara M."/>
            <person name="Kanai K."/>
            <person name="Kashimoto K."/>
            <person name="Kimura S."/>
            <person name="Kitagawa M."/>
            <person name="Makino K."/>
            <person name="Masuda S."/>
            <person name="Miki T."/>
            <person name="Mizobuchi K."/>
            <person name="Mori H."/>
            <person name="Motomura K."/>
            <person name="Nakamura Y."/>
            <person name="Nashimoto H."/>
            <person name="Nishio Y."/>
            <person name="Saito N."/>
            <person name="Sampei G."/>
            <person name="Seki Y."/>
            <person name="Tagami H."/>
            <person name="Takemoto K."/>
            <person name="Wada C."/>
            <person name="Yamamoto Y."/>
            <person name="Yano M."/>
            <person name="Horiuchi T."/>
        </authorList>
    </citation>
    <scope>NUCLEOTIDE SEQUENCE [LARGE SCALE GENOMIC DNA]</scope>
    <source>
        <strain>K12 / W3110 / ATCC 27325 / DSM 5911</strain>
    </source>
</reference>
<reference key="2">
    <citation type="journal article" date="1997" name="Science">
        <title>The complete genome sequence of Escherichia coli K-12.</title>
        <authorList>
            <person name="Blattner F.R."/>
            <person name="Plunkett G. III"/>
            <person name="Bloch C.A."/>
            <person name="Perna N.T."/>
            <person name="Burland V."/>
            <person name="Riley M."/>
            <person name="Collado-Vides J."/>
            <person name="Glasner J.D."/>
            <person name="Rode C.K."/>
            <person name="Mayhew G.F."/>
            <person name="Gregor J."/>
            <person name="Davis N.W."/>
            <person name="Kirkpatrick H.A."/>
            <person name="Goeden M.A."/>
            <person name="Rose D.J."/>
            <person name="Mau B."/>
            <person name="Shao Y."/>
        </authorList>
    </citation>
    <scope>NUCLEOTIDE SEQUENCE [LARGE SCALE GENOMIC DNA]</scope>
    <source>
        <strain>K12 / MG1655 / ATCC 47076</strain>
    </source>
</reference>
<reference key="3">
    <citation type="journal article" date="2006" name="Mol. Syst. Biol.">
        <title>Highly accurate genome sequences of Escherichia coli K-12 strains MG1655 and W3110.</title>
        <authorList>
            <person name="Hayashi K."/>
            <person name="Morooka N."/>
            <person name="Yamamoto Y."/>
            <person name="Fujita K."/>
            <person name="Isono K."/>
            <person name="Choi S."/>
            <person name="Ohtsubo E."/>
            <person name="Baba T."/>
            <person name="Wanner B.L."/>
            <person name="Mori H."/>
            <person name="Horiuchi T."/>
        </authorList>
    </citation>
    <scope>NUCLEOTIDE SEQUENCE [LARGE SCALE GENOMIC DNA]</scope>
    <source>
        <strain>K12 / W3110 / ATCC 27325 / DSM 5911</strain>
    </source>
</reference>
<reference key="4">
    <citation type="journal article" date="2008" name="Proc. Natl. Acad. Sci. U.S.A.">
        <title>RimO, a MiaB-like enzyme, methylthiolates the universally conserved Asp88 residue of ribosomal protein S12 in Escherichia coli.</title>
        <authorList>
            <person name="Anton B.P."/>
            <person name="Saleh L."/>
            <person name="Benner J.S."/>
            <person name="Raleigh E.A."/>
            <person name="Kasif S."/>
            <person name="Roberts R.J."/>
        </authorList>
    </citation>
    <scope>FUNCTION AS A METHYLTHIOTRANSFERASE</scope>
    <source>
        <strain>K12 / MG1655 / ATCC 47076</strain>
    </source>
</reference>
<reference key="5">
    <citation type="journal article" date="2009" name="Biochemistry">
        <title>Characterization of RimO, a new member of the methylthiotransferase subclass of the radical SAM superfamily.</title>
        <authorList>
            <person name="Lee K.H."/>
            <person name="Saleh L."/>
            <person name="Anton B.P."/>
            <person name="Madinger C.L."/>
            <person name="Benner J.S."/>
            <person name="Iwig D.F."/>
            <person name="Roberts R.J."/>
            <person name="Krebs C."/>
            <person name="Booker S.J."/>
        </authorList>
    </citation>
    <scope>CATALYTIC ACTIVITY</scope>
    <scope>COFACTOR</scope>
    <scope>EPR SPECTROSCOPY</scope>
</reference>
<reference key="6">
    <citation type="journal article" date="2011" name="Mol. Cell. Proteomics">
        <title>A proteomic and transcriptomic approach reveals new insight into beta-methylthiolation of Escherichia coli ribosomal protein S12.</title>
        <authorList>
            <person name="Strader M.B."/>
            <person name="Costantino N."/>
            <person name="Elkins C.A."/>
            <person name="Chen C.Y."/>
            <person name="Patel I."/>
            <person name="Makusky A.J."/>
            <person name="Choy J.S."/>
            <person name="Court D.L."/>
            <person name="Markey S.P."/>
            <person name="Kowalak J.A."/>
        </authorList>
    </citation>
    <scope>FUNCTION</scope>
    <scope>DISRUPTION PHENOTYPE</scope>
    <source>
        <strain>K12 / W3110 / ATCC 27325 / DSM 5911</strain>
    </source>
</reference>
<accession>P0AEI4</accession>
<accession>P75802</accession>
<dbReference type="EC" id="2.8.4.4" evidence="4"/>
<dbReference type="EMBL" id="U00096">
    <property type="protein sequence ID" value="AAC73922.1"/>
    <property type="molecule type" value="Genomic_DNA"/>
</dbReference>
<dbReference type="EMBL" id="AP009048">
    <property type="protein sequence ID" value="BAA35530.1"/>
    <property type="molecule type" value="Genomic_DNA"/>
</dbReference>
<dbReference type="PIR" id="C64821">
    <property type="entry name" value="C64821"/>
</dbReference>
<dbReference type="RefSeq" id="NP_415356.1">
    <property type="nucleotide sequence ID" value="NC_000913.3"/>
</dbReference>
<dbReference type="RefSeq" id="WP_000049367.1">
    <property type="nucleotide sequence ID" value="NZ_STEB01000019.1"/>
</dbReference>
<dbReference type="SMR" id="P0AEI4"/>
<dbReference type="BioGRID" id="4261845">
    <property type="interactions" value="82"/>
</dbReference>
<dbReference type="BioGRID" id="849839">
    <property type="interactions" value="3"/>
</dbReference>
<dbReference type="DIP" id="DIP-48218N"/>
<dbReference type="FunCoup" id="P0AEI4">
    <property type="interactions" value="449"/>
</dbReference>
<dbReference type="IntAct" id="P0AEI4">
    <property type="interactions" value="20"/>
</dbReference>
<dbReference type="STRING" id="511145.b0835"/>
<dbReference type="jPOST" id="P0AEI4"/>
<dbReference type="PaxDb" id="511145-b0835"/>
<dbReference type="EnsemblBacteria" id="AAC73922">
    <property type="protein sequence ID" value="AAC73922"/>
    <property type="gene ID" value="b0835"/>
</dbReference>
<dbReference type="GeneID" id="75204700"/>
<dbReference type="GeneID" id="945465"/>
<dbReference type="KEGG" id="ecj:JW0819"/>
<dbReference type="KEGG" id="eco:b0835"/>
<dbReference type="KEGG" id="ecoc:C3026_05230"/>
<dbReference type="PATRIC" id="fig|1411691.4.peg.1443"/>
<dbReference type="EchoBASE" id="EB3251"/>
<dbReference type="eggNOG" id="COG0621">
    <property type="taxonomic scope" value="Bacteria"/>
</dbReference>
<dbReference type="HOGENOM" id="CLU_018697_0_0_6"/>
<dbReference type="InParanoid" id="P0AEI4"/>
<dbReference type="OMA" id="HYAYPTG"/>
<dbReference type="OrthoDB" id="9805215at2"/>
<dbReference type="PhylomeDB" id="P0AEI4"/>
<dbReference type="BioCyc" id="EcoCyc:G6435-MONOMER"/>
<dbReference type="BioCyc" id="MetaCyc:G6435-MONOMER"/>
<dbReference type="BRENDA" id="2.8.4.4">
    <property type="organism ID" value="2026"/>
</dbReference>
<dbReference type="PRO" id="PR:P0AEI4"/>
<dbReference type="Proteomes" id="UP000000625">
    <property type="component" value="Chromosome"/>
</dbReference>
<dbReference type="GO" id="GO:0005829">
    <property type="term" value="C:cytosol"/>
    <property type="evidence" value="ECO:0000314"/>
    <property type="project" value="EcoCyc"/>
</dbReference>
<dbReference type="GO" id="GO:0051539">
    <property type="term" value="F:4 iron, 4 sulfur cluster binding"/>
    <property type="evidence" value="ECO:0000314"/>
    <property type="project" value="EcoCyc"/>
</dbReference>
<dbReference type="GO" id="GO:0035599">
    <property type="term" value="F:aspartic acid methylthiotransferase activity"/>
    <property type="evidence" value="ECO:0000314"/>
    <property type="project" value="EcoCyc"/>
</dbReference>
<dbReference type="GO" id="GO:0046872">
    <property type="term" value="F:metal ion binding"/>
    <property type="evidence" value="ECO:0007669"/>
    <property type="project" value="UniProtKB-KW"/>
</dbReference>
<dbReference type="GO" id="GO:0103039">
    <property type="term" value="F:protein methylthiotransferase activity"/>
    <property type="evidence" value="ECO:0007669"/>
    <property type="project" value="UniProtKB-EC"/>
</dbReference>
<dbReference type="GO" id="GO:0006400">
    <property type="term" value="P:tRNA modification"/>
    <property type="evidence" value="ECO:0007669"/>
    <property type="project" value="InterPro"/>
</dbReference>
<dbReference type="CDD" id="cd01335">
    <property type="entry name" value="Radical_SAM"/>
    <property type="match status" value="1"/>
</dbReference>
<dbReference type="FunFam" id="2.40.50.140:FF:000060">
    <property type="entry name" value="Ribosomal protein S12 methylthiotransferase RimO"/>
    <property type="match status" value="1"/>
</dbReference>
<dbReference type="FunFam" id="3.40.50.12160:FF:000002">
    <property type="entry name" value="Ribosomal protein S12 methylthiotransferase RimO"/>
    <property type="match status" value="1"/>
</dbReference>
<dbReference type="FunFam" id="3.80.30.20:FF:000001">
    <property type="entry name" value="tRNA-2-methylthio-N(6)-dimethylallyladenosine synthase 2"/>
    <property type="match status" value="1"/>
</dbReference>
<dbReference type="Gene3D" id="3.40.50.12160">
    <property type="entry name" value="Methylthiotransferase, N-terminal domain"/>
    <property type="match status" value="1"/>
</dbReference>
<dbReference type="Gene3D" id="2.40.50.140">
    <property type="entry name" value="Nucleic acid-binding proteins"/>
    <property type="match status" value="1"/>
</dbReference>
<dbReference type="Gene3D" id="3.80.30.20">
    <property type="entry name" value="tm_1862 like domain"/>
    <property type="match status" value="1"/>
</dbReference>
<dbReference type="HAMAP" id="MF_01865">
    <property type="entry name" value="MTTase_RimO"/>
    <property type="match status" value="1"/>
</dbReference>
<dbReference type="InterPro" id="IPR006638">
    <property type="entry name" value="Elp3/MiaA/NifB-like_rSAM"/>
</dbReference>
<dbReference type="InterPro" id="IPR005839">
    <property type="entry name" value="Methylthiotransferase"/>
</dbReference>
<dbReference type="InterPro" id="IPR020612">
    <property type="entry name" value="Methylthiotransferase_CS"/>
</dbReference>
<dbReference type="InterPro" id="IPR013848">
    <property type="entry name" value="Methylthiotransferase_N"/>
</dbReference>
<dbReference type="InterPro" id="IPR038135">
    <property type="entry name" value="Methylthiotransferase_N_sf"/>
</dbReference>
<dbReference type="InterPro" id="IPR012340">
    <property type="entry name" value="NA-bd_OB-fold"/>
</dbReference>
<dbReference type="InterPro" id="IPR005840">
    <property type="entry name" value="Ribosomal_uS12_MeSTrfase_RimO"/>
</dbReference>
<dbReference type="InterPro" id="IPR007197">
    <property type="entry name" value="rSAM"/>
</dbReference>
<dbReference type="InterPro" id="IPR023404">
    <property type="entry name" value="rSAM_horseshoe"/>
</dbReference>
<dbReference type="InterPro" id="IPR002792">
    <property type="entry name" value="TRAM_dom"/>
</dbReference>
<dbReference type="NCBIfam" id="TIGR01125">
    <property type="entry name" value="30S ribosomal protein S12 methylthiotransferase RimO"/>
    <property type="match status" value="1"/>
</dbReference>
<dbReference type="NCBIfam" id="TIGR00089">
    <property type="entry name" value="MiaB/RimO family radical SAM methylthiotransferase"/>
    <property type="match status" value="1"/>
</dbReference>
<dbReference type="PANTHER" id="PTHR43837">
    <property type="entry name" value="RIBOSOMAL PROTEIN S12 METHYLTHIOTRANSFERASE RIMO"/>
    <property type="match status" value="1"/>
</dbReference>
<dbReference type="PANTHER" id="PTHR43837:SF1">
    <property type="entry name" value="RIBOSOMAL PROTEIN US12 METHYLTHIOTRANSFERASE RIMO"/>
    <property type="match status" value="1"/>
</dbReference>
<dbReference type="Pfam" id="PF04055">
    <property type="entry name" value="Radical_SAM"/>
    <property type="match status" value="1"/>
</dbReference>
<dbReference type="Pfam" id="PF18693">
    <property type="entry name" value="TRAM_2"/>
    <property type="match status" value="1"/>
</dbReference>
<dbReference type="Pfam" id="PF00919">
    <property type="entry name" value="UPF0004"/>
    <property type="match status" value="1"/>
</dbReference>
<dbReference type="SFLD" id="SFLDG01082">
    <property type="entry name" value="B12-binding_domain_containing"/>
    <property type="match status" value="1"/>
</dbReference>
<dbReference type="SFLD" id="SFLDS00029">
    <property type="entry name" value="Radical_SAM"/>
    <property type="match status" value="1"/>
</dbReference>
<dbReference type="SFLD" id="SFLDF00274">
    <property type="entry name" value="ribosomal_protein_S12_methylth"/>
    <property type="match status" value="1"/>
</dbReference>
<dbReference type="SMART" id="SM00729">
    <property type="entry name" value="Elp3"/>
    <property type="match status" value="1"/>
</dbReference>
<dbReference type="SUPFAM" id="SSF102114">
    <property type="entry name" value="Radical SAM enzymes"/>
    <property type="match status" value="1"/>
</dbReference>
<dbReference type="PROSITE" id="PS51449">
    <property type="entry name" value="MTTASE_N"/>
    <property type="match status" value="1"/>
</dbReference>
<dbReference type="PROSITE" id="PS01278">
    <property type="entry name" value="MTTASE_RADICAL"/>
    <property type="match status" value="1"/>
</dbReference>
<dbReference type="PROSITE" id="PS51918">
    <property type="entry name" value="RADICAL_SAM"/>
    <property type="match status" value="1"/>
</dbReference>
<dbReference type="PROSITE" id="PS50926">
    <property type="entry name" value="TRAM"/>
    <property type="match status" value="1"/>
</dbReference>
<proteinExistence type="evidence at protein level"/>
<keyword id="KW-0004">4Fe-4S</keyword>
<keyword id="KW-0963">Cytoplasm</keyword>
<keyword id="KW-0408">Iron</keyword>
<keyword id="KW-0411">Iron-sulfur</keyword>
<keyword id="KW-0479">Metal-binding</keyword>
<keyword id="KW-1185">Reference proteome</keyword>
<keyword id="KW-0949">S-adenosyl-L-methionine</keyword>
<keyword id="KW-0808">Transferase</keyword>
<comment type="function">
    <text evidence="3 5">Catalyzes the methylthiolation of the residue Asp-89 of ribosomal protein uS12.</text>
</comment>
<comment type="catalytic activity">
    <reaction evidence="4">
        <text>L-aspartate(89)-[ribosomal protein uS12]-hydrogen + (sulfur carrier)-SH + AH2 + 2 S-adenosyl-L-methionine = 3-methylsulfanyl-L-aspartate(89)-[ribosomal protein uS12]-hydrogen + (sulfur carrier)-H + 5'-deoxyadenosine + L-methionine + A + S-adenosyl-L-homocysteine + 2 H(+)</text>
        <dbReference type="Rhea" id="RHEA:37087"/>
        <dbReference type="Rhea" id="RHEA-COMP:10460"/>
        <dbReference type="Rhea" id="RHEA-COMP:10461"/>
        <dbReference type="Rhea" id="RHEA-COMP:14737"/>
        <dbReference type="Rhea" id="RHEA-COMP:14739"/>
        <dbReference type="ChEBI" id="CHEBI:13193"/>
        <dbReference type="ChEBI" id="CHEBI:15378"/>
        <dbReference type="ChEBI" id="CHEBI:17319"/>
        <dbReference type="ChEBI" id="CHEBI:17499"/>
        <dbReference type="ChEBI" id="CHEBI:29917"/>
        <dbReference type="ChEBI" id="CHEBI:29961"/>
        <dbReference type="ChEBI" id="CHEBI:57844"/>
        <dbReference type="ChEBI" id="CHEBI:57856"/>
        <dbReference type="ChEBI" id="CHEBI:59789"/>
        <dbReference type="ChEBI" id="CHEBI:64428"/>
        <dbReference type="ChEBI" id="CHEBI:73599"/>
        <dbReference type="EC" id="2.8.4.4"/>
    </reaction>
</comment>
<comment type="cofactor">
    <cofactor evidence="4">
        <name>[4Fe-4S] cluster</name>
        <dbReference type="ChEBI" id="CHEBI:49883"/>
    </cofactor>
    <text evidence="4">Binds 2 [4Fe-4S] clusters. One cluster is coordinated with 3 cysteines and an exchangeable S-adenosyl-L-methionine.</text>
</comment>
<comment type="subcellular location">
    <subcellularLocation>
        <location evidence="6">Cytoplasm</location>
    </subcellularLocation>
</comment>
<comment type="disruption phenotype">
    <text evidence="5">Mutant shows a lack of methylthiolation of protein uS12 and a decrease in transcription of a subset of genes.</text>
</comment>
<comment type="similarity">
    <text evidence="6">Belongs to the methylthiotransferase family. RimO subfamily.</text>
</comment>
<evidence type="ECO:0000250" key="1"/>
<evidence type="ECO:0000255" key="2">
    <source>
        <dbReference type="PROSITE-ProRule" id="PRU01266"/>
    </source>
</evidence>
<evidence type="ECO:0000269" key="3">
    <source>
    </source>
</evidence>
<evidence type="ECO:0000269" key="4">
    <source>
    </source>
</evidence>
<evidence type="ECO:0000269" key="5">
    <source>
    </source>
</evidence>
<evidence type="ECO:0000305" key="6"/>